<reference key="1">
    <citation type="journal article" date="2007" name="Proc. Natl. Acad. Sci. U.S.A.">
        <title>Genome and proteome of long-chain alkane degrading Geobacillus thermodenitrificans NG80-2 isolated from a deep-subsurface oil reservoir.</title>
        <authorList>
            <person name="Feng L."/>
            <person name="Wang W."/>
            <person name="Cheng J."/>
            <person name="Ren Y."/>
            <person name="Zhao G."/>
            <person name="Gao C."/>
            <person name="Tang Y."/>
            <person name="Liu X."/>
            <person name="Han W."/>
            <person name="Peng X."/>
            <person name="Liu R."/>
            <person name="Wang L."/>
        </authorList>
    </citation>
    <scope>NUCLEOTIDE SEQUENCE [LARGE SCALE GENOMIC DNA]</scope>
    <source>
        <strain>NG80-2</strain>
    </source>
</reference>
<sequence length="165" mass="19529">MNGRKDEELKDLTLLGNQGTTYSFTYDPNLLEVFDNKHPDRDYFVKFNCPEFTSLCPKTRQPDFATIYISYIPDKKCVESKSLKLYLFSFRNHGDFHEDCVNIIMNDLINVMEPRYIEVWGKFTPRGGISIDPYCNWGRPGTKYEKMAEYRLLNHDLYPEKIDNR</sequence>
<organism>
    <name type="scientific">Geobacillus thermodenitrificans (strain NG80-2)</name>
    <dbReference type="NCBI Taxonomy" id="420246"/>
    <lineage>
        <taxon>Bacteria</taxon>
        <taxon>Bacillati</taxon>
        <taxon>Bacillota</taxon>
        <taxon>Bacilli</taxon>
        <taxon>Bacillales</taxon>
        <taxon>Anoxybacillaceae</taxon>
        <taxon>Geobacillus</taxon>
    </lineage>
</organism>
<comment type="function">
    <text evidence="1">Catalyzes the NADPH-dependent reduction of 7-cyano-7-deazaguanine (preQ0) to 7-aminomethyl-7-deazaguanine (preQ1).</text>
</comment>
<comment type="catalytic activity">
    <reaction evidence="1">
        <text>7-aminomethyl-7-carbaguanine + 2 NADP(+) = 7-cyano-7-deazaguanine + 2 NADPH + 3 H(+)</text>
        <dbReference type="Rhea" id="RHEA:13409"/>
        <dbReference type="ChEBI" id="CHEBI:15378"/>
        <dbReference type="ChEBI" id="CHEBI:45075"/>
        <dbReference type="ChEBI" id="CHEBI:57783"/>
        <dbReference type="ChEBI" id="CHEBI:58349"/>
        <dbReference type="ChEBI" id="CHEBI:58703"/>
        <dbReference type="EC" id="1.7.1.13"/>
    </reaction>
</comment>
<comment type="pathway">
    <text evidence="1">tRNA modification; tRNA-queuosine biosynthesis.</text>
</comment>
<comment type="subcellular location">
    <subcellularLocation>
        <location evidence="1">Cytoplasm</location>
    </subcellularLocation>
</comment>
<comment type="similarity">
    <text evidence="1">Belongs to the GTP cyclohydrolase I family. QueF type 1 subfamily.</text>
</comment>
<dbReference type="EC" id="1.7.1.13" evidence="1"/>
<dbReference type="EMBL" id="CP000557">
    <property type="protein sequence ID" value="ABO66244.1"/>
    <property type="molecule type" value="Genomic_DNA"/>
</dbReference>
<dbReference type="RefSeq" id="WP_008878810.1">
    <property type="nucleotide sequence ID" value="NC_009328.1"/>
</dbReference>
<dbReference type="SMR" id="A4ILP0"/>
<dbReference type="GeneID" id="87621539"/>
<dbReference type="KEGG" id="gtn:GTNG_0866"/>
<dbReference type="eggNOG" id="COG0780">
    <property type="taxonomic scope" value="Bacteria"/>
</dbReference>
<dbReference type="HOGENOM" id="CLU_102489_0_1_9"/>
<dbReference type="UniPathway" id="UPA00392"/>
<dbReference type="Proteomes" id="UP000001578">
    <property type="component" value="Chromosome"/>
</dbReference>
<dbReference type="GO" id="GO:0005737">
    <property type="term" value="C:cytoplasm"/>
    <property type="evidence" value="ECO:0007669"/>
    <property type="project" value="UniProtKB-SubCell"/>
</dbReference>
<dbReference type="GO" id="GO:0033739">
    <property type="term" value="F:preQ1 synthase activity"/>
    <property type="evidence" value="ECO:0007669"/>
    <property type="project" value="UniProtKB-UniRule"/>
</dbReference>
<dbReference type="GO" id="GO:0008616">
    <property type="term" value="P:queuosine biosynthetic process"/>
    <property type="evidence" value="ECO:0007669"/>
    <property type="project" value="UniProtKB-UniRule"/>
</dbReference>
<dbReference type="GO" id="GO:0006400">
    <property type="term" value="P:tRNA modification"/>
    <property type="evidence" value="ECO:0007669"/>
    <property type="project" value="UniProtKB-UniRule"/>
</dbReference>
<dbReference type="Gene3D" id="3.30.1130.10">
    <property type="match status" value="1"/>
</dbReference>
<dbReference type="HAMAP" id="MF_00818">
    <property type="entry name" value="QueF_type1"/>
    <property type="match status" value="1"/>
</dbReference>
<dbReference type="InterPro" id="IPR043133">
    <property type="entry name" value="GTP-CH-I_C/QueF"/>
</dbReference>
<dbReference type="InterPro" id="IPR050084">
    <property type="entry name" value="NADPH_dep_7-cyano-7-deazaG_red"/>
</dbReference>
<dbReference type="InterPro" id="IPR029500">
    <property type="entry name" value="QueF"/>
</dbReference>
<dbReference type="InterPro" id="IPR016856">
    <property type="entry name" value="QueF_type1"/>
</dbReference>
<dbReference type="NCBIfam" id="TIGR03139">
    <property type="entry name" value="QueF-II"/>
    <property type="match status" value="1"/>
</dbReference>
<dbReference type="PANTHER" id="PTHR34354">
    <property type="entry name" value="NADPH-DEPENDENT 7-CYANO-7-DEAZAGUANINE REDUCTASE"/>
    <property type="match status" value="1"/>
</dbReference>
<dbReference type="PANTHER" id="PTHR34354:SF1">
    <property type="entry name" value="NADPH-DEPENDENT 7-CYANO-7-DEAZAGUANINE REDUCTASE"/>
    <property type="match status" value="1"/>
</dbReference>
<dbReference type="Pfam" id="PF14489">
    <property type="entry name" value="QueF"/>
    <property type="match status" value="1"/>
</dbReference>
<dbReference type="PIRSF" id="PIRSF027377">
    <property type="entry name" value="Nitrile_oxidored_QueF"/>
    <property type="match status" value="1"/>
</dbReference>
<dbReference type="SUPFAM" id="SSF55620">
    <property type="entry name" value="Tetrahydrobiopterin biosynthesis enzymes-like"/>
    <property type="match status" value="1"/>
</dbReference>
<gene>
    <name evidence="1" type="primary">queF</name>
    <name type="ordered locus">GTNG_0866</name>
</gene>
<keyword id="KW-0963">Cytoplasm</keyword>
<keyword id="KW-0521">NADP</keyword>
<keyword id="KW-0560">Oxidoreductase</keyword>
<keyword id="KW-0671">Queuosine biosynthesis</keyword>
<accession>A4ILP0</accession>
<protein>
    <recommendedName>
        <fullName evidence="1">NADPH-dependent 7-cyano-7-deazaguanine reductase</fullName>
        <ecNumber evidence="1">1.7.1.13</ecNumber>
    </recommendedName>
    <alternativeName>
        <fullName evidence="1">7-cyano-7-carbaguanine reductase</fullName>
    </alternativeName>
    <alternativeName>
        <fullName evidence="1">NADPH-dependent nitrile oxidoreductase</fullName>
    </alternativeName>
    <alternativeName>
        <fullName evidence="1">PreQ(0) reductase</fullName>
    </alternativeName>
</protein>
<proteinExistence type="inferred from homology"/>
<name>QUEF_GEOTN</name>
<feature type="chain" id="PRO_1000062384" description="NADPH-dependent 7-cyano-7-deazaguanine reductase">
    <location>
        <begin position="1"/>
        <end position="165"/>
    </location>
</feature>
<feature type="active site" description="Thioimide intermediate" evidence="1">
    <location>
        <position position="56"/>
    </location>
</feature>
<feature type="active site" description="Proton donor" evidence="1">
    <location>
        <position position="63"/>
    </location>
</feature>
<feature type="binding site" evidence="1">
    <location>
        <begin position="78"/>
        <end position="80"/>
    </location>
    <ligand>
        <name>substrate</name>
    </ligand>
</feature>
<feature type="binding site" evidence="1">
    <location>
        <begin position="97"/>
        <end position="98"/>
    </location>
    <ligand>
        <name>substrate</name>
    </ligand>
</feature>
<evidence type="ECO:0000255" key="1">
    <source>
        <dbReference type="HAMAP-Rule" id="MF_00818"/>
    </source>
</evidence>